<comment type="function">
    <text evidence="3">Putative taste receptor which may play a role in the perception of bitterness.</text>
</comment>
<comment type="subcellular location">
    <subcellularLocation>
        <location evidence="3">Membrane</location>
        <topology evidence="3">Multi-pass membrane protein</topology>
    </subcellularLocation>
</comment>
<comment type="miscellaneous">
    <text evidence="3">Several bitter taste receptors are expressed in a single taste receptor cell.</text>
</comment>
<comment type="similarity">
    <text evidence="2">Belongs to the G-protein coupled receptor T2R family.</text>
</comment>
<reference evidence="4" key="1">
    <citation type="submission" date="2003-08" db="EMBL/GenBank/DDBJ databases">
        <title>Identification of new putative rat taste receptors belonging to the T2R family.</title>
        <authorList>
            <person name="Conte C."/>
            <person name="Ebeling M."/>
            <person name="Marcuz A."/>
            <person name="Andres-Barquin P.J."/>
        </authorList>
    </citation>
    <scope>NUCLEOTIDE SEQUENCE [GENOMIC DNA]</scope>
    <source>
        <strain evidence="4">Sprague-Dawley</strain>
    </source>
</reference>
<accession>Q67ET4</accession>
<name>TR125_RAT</name>
<feature type="chain" id="PRO_0000248484" description="Taste receptor type 2 member 125">
    <location>
        <begin position="1"/>
        <end position="310"/>
    </location>
</feature>
<feature type="topological domain" description="Extracellular" evidence="2">
    <location>
        <begin position="1"/>
        <end position="2"/>
    </location>
</feature>
<feature type="transmembrane region" description="Helical; Name=1" evidence="2">
    <location>
        <begin position="3"/>
        <end position="23"/>
    </location>
</feature>
<feature type="topological domain" description="Cytoplasmic" evidence="2">
    <location>
        <begin position="24"/>
        <end position="46"/>
    </location>
</feature>
<feature type="transmembrane region" description="Helical; Name=2" evidence="2">
    <location>
        <begin position="47"/>
        <end position="67"/>
    </location>
</feature>
<feature type="topological domain" description="Extracellular" evidence="2">
    <location>
        <begin position="68"/>
        <end position="87"/>
    </location>
</feature>
<feature type="transmembrane region" description="Helical; Name=3" evidence="2">
    <location>
        <begin position="88"/>
        <end position="108"/>
    </location>
</feature>
<feature type="topological domain" description="Cytoplasmic" evidence="2">
    <location>
        <begin position="109"/>
        <end position="128"/>
    </location>
</feature>
<feature type="transmembrane region" description="Helical; Name=4" evidence="2">
    <location>
        <begin position="129"/>
        <end position="149"/>
    </location>
</feature>
<feature type="topological domain" description="Extracellular" evidence="2">
    <location>
        <begin position="150"/>
        <end position="185"/>
    </location>
</feature>
<feature type="transmembrane region" description="Helical; Name=5" evidence="2">
    <location>
        <begin position="186"/>
        <end position="206"/>
    </location>
</feature>
<feature type="topological domain" description="Cytoplasmic" evidence="2">
    <location>
        <begin position="207"/>
        <end position="232"/>
    </location>
</feature>
<feature type="transmembrane region" description="Helical; Name=6" evidence="2">
    <location>
        <begin position="233"/>
        <end position="253"/>
    </location>
</feature>
<feature type="topological domain" description="Extracellular" evidence="2">
    <location>
        <begin position="254"/>
        <end position="261"/>
    </location>
</feature>
<feature type="transmembrane region" description="Helical; Name=7" evidence="2">
    <location>
        <begin position="262"/>
        <end position="282"/>
    </location>
</feature>
<feature type="topological domain" description="Cytoplasmic" evidence="2">
    <location>
        <begin position="283"/>
        <end position="310"/>
    </location>
</feature>
<feature type="glycosylation site" description="N-linked (GlcNAc...) asparagine" evidence="2">
    <location>
        <position position="162"/>
    </location>
</feature>
<feature type="glycosylation site" description="N-linked (GlcNAc...) asparagine" evidence="2">
    <location>
        <position position="171"/>
    </location>
</feature>
<feature type="glycosylation site" description="N-linked (GlcNAc...) asparagine" evidence="2">
    <location>
        <position position="183"/>
    </location>
</feature>
<organism>
    <name type="scientific">Rattus norvegicus</name>
    <name type="common">Rat</name>
    <dbReference type="NCBI Taxonomy" id="10116"/>
    <lineage>
        <taxon>Eukaryota</taxon>
        <taxon>Metazoa</taxon>
        <taxon>Chordata</taxon>
        <taxon>Craniata</taxon>
        <taxon>Vertebrata</taxon>
        <taxon>Euteleostomi</taxon>
        <taxon>Mammalia</taxon>
        <taxon>Eutheria</taxon>
        <taxon>Euarchontoglires</taxon>
        <taxon>Glires</taxon>
        <taxon>Rodentia</taxon>
        <taxon>Myomorpha</taxon>
        <taxon>Muroidea</taxon>
        <taxon>Muridae</taxon>
        <taxon>Murinae</taxon>
        <taxon>Rattus</taxon>
    </lineage>
</organism>
<evidence type="ECO:0000250" key="1">
    <source>
        <dbReference type="UniProtKB" id="Q7M710"/>
    </source>
</evidence>
<evidence type="ECO:0000255" key="2"/>
<evidence type="ECO:0000305" key="3"/>
<evidence type="ECO:0000312" key="4">
    <source>
        <dbReference type="EMBL" id="AAR13345.1"/>
    </source>
</evidence>
<sequence length="310" mass="35639">MGIVIGIICAFIIIVQFIIGNVANGFIALVNIIDWVKRRKISLVDQIITALAISRIDMLCSTFLIVLITSLYPDLNTAVNMVKISNNIWIVANHFSIWLATSLSIFYFLKIANFSNYVFLCLRWRLSKVVSVTLLLSLVLLLMNILIMNMHIDTWSDGFKRNVSFGFRSKNCTRFFKLALLINTTFTCVPFTVSMVAFLLLIFSLWRHLKNMQYHAKGSRDPSTAVHIKALQMVVVFVLFYTFFFLSLAIQLWTSESLEKNNLFYVTLIITFPSVHSCMLILRNSKLRQASLLVLWWLLCRSKDIQTLVP</sequence>
<gene>
    <name evidence="1" type="primary">Tas2r125</name>
    <name type="synonym">T2r16</name>
</gene>
<dbReference type="EMBL" id="AY362736">
    <property type="protein sequence ID" value="AAR13345.1"/>
    <property type="molecule type" value="Genomic_DNA"/>
</dbReference>
<dbReference type="SMR" id="Q67ET4"/>
<dbReference type="FunCoup" id="Q67ET4">
    <property type="interactions" value="8"/>
</dbReference>
<dbReference type="GlyCosmos" id="Q67ET4">
    <property type="glycosylation" value="3 sites, No reported glycans"/>
</dbReference>
<dbReference type="GlyGen" id="Q67ET4">
    <property type="glycosylation" value="3 sites"/>
</dbReference>
<dbReference type="PhosphoSitePlus" id="Q67ET4"/>
<dbReference type="PaxDb" id="10116-ENSRNOP00000037096"/>
<dbReference type="AGR" id="RGD:1596030"/>
<dbReference type="RGD" id="1596030">
    <property type="gene designation" value="Tas2r125"/>
</dbReference>
<dbReference type="eggNOG" id="ENOG502SKRK">
    <property type="taxonomic scope" value="Eukaryota"/>
</dbReference>
<dbReference type="InParanoid" id="Q67ET4"/>
<dbReference type="OrthoDB" id="8876749at2759"/>
<dbReference type="PhylomeDB" id="Q67ET4"/>
<dbReference type="PRO" id="PR:Q67ET4"/>
<dbReference type="Proteomes" id="UP000002494">
    <property type="component" value="Unplaced"/>
</dbReference>
<dbReference type="GO" id="GO:0016020">
    <property type="term" value="C:membrane"/>
    <property type="evidence" value="ECO:0000318"/>
    <property type="project" value="GO_Central"/>
</dbReference>
<dbReference type="GO" id="GO:0033038">
    <property type="term" value="F:bitter taste receptor activity"/>
    <property type="evidence" value="ECO:0000318"/>
    <property type="project" value="GO_Central"/>
</dbReference>
<dbReference type="GO" id="GO:0004930">
    <property type="term" value="F:G protein-coupled receptor activity"/>
    <property type="evidence" value="ECO:0007669"/>
    <property type="project" value="UniProtKB-KW"/>
</dbReference>
<dbReference type="GO" id="GO:0001580">
    <property type="term" value="P:detection of chemical stimulus involved in sensory perception of bitter taste"/>
    <property type="evidence" value="ECO:0000318"/>
    <property type="project" value="GO_Central"/>
</dbReference>
<dbReference type="CDD" id="cd15019">
    <property type="entry name" value="7tm_TAS2R14-like"/>
    <property type="match status" value="1"/>
</dbReference>
<dbReference type="FunFam" id="1.20.1070.10:FF:000042">
    <property type="entry name" value="Taste receptor type 2 member 7"/>
    <property type="match status" value="1"/>
</dbReference>
<dbReference type="Gene3D" id="1.20.1070.10">
    <property type="entry name" value="Rhodopsin 7-helix transmembrane proteins"/>
    <property type="match status" value="1"/>
</dbReference>
<dbReference type="InterPro" id="IPR017452">
    <property type="entry name" value="GPCR_Rhodpsn_7TM"/>
</dbReference>
<dbReference type="InterPro" id="IPR007960">
    <property type="entry name" value="TAS2R"/>
</dbReference>
<dbReference type="PANTHER" id="PTHR11394">
    <property type="entry name" value="TASTE RECEPTOR TYPE 2"/>
    <property type="match status" value="1"/>
</dbReference>
<dbReference type="PANTHER" id="PTHR11394:SF128">
    <property type="entry name" value="TASTE RECEPTOR TYPE 2-RELATED"/>
    <property type="match status" value="1"/>
</dbReference>
<dbReference type="Pfam" id="PF05296">
    <property type="entry name" value="TAS2R"/>
    <property type="match status" value="1"/>
</dbReference>
<dbReference type="SUPFAM" id="SSF81321">
    <property type="entry name" value="Family A G protein-coupled receptor-like"/>
    <property type="match status" value="1"/>
</dbReference>
<dbReference type="PROSITE" id="PS50262">
    <property type="entry name" value="G_PROTEIN_RECEP_F1_2"/>
    <property type="match status" value="1"/>
</dbReference>
<protein>
    <recommendedName>
        <fullName>Taste receptor type 2 member 125</fullName>
        <shortName>T2r125</shortName>
    </recommendedName>
    <alternativeName>
        <fullName>Taste receptor type 2 member 16</fullName>
        <shortName>T2R16</shortName>
    </alternativeName>
</protein>
<keyword id="KW-0297">G-protein coupled receptor</keyword>
<keyword id="KW-0325">Glycoprotein</keyword>
<keyword id="KW-0472">Membrane</keyword>
<keyword id="KW-0675">Receptor</keyword>
<keyword id="KW-1185">Reference proteome</keyword>
<keyword id="KW-0716">Sensory transduction</keyword>
<keyword id="KW-0919">Taste</keyword>
<keyword id="KW-0807">Transducer</keyword>
<keyword id="KW-0812">Transmembrane</keyword>
<keyword id="KW-1133">Transmembrane helix</keyword>
<proteinExistence type="inferred from homology"/>